<gene>
    <name evidence="1" type="primary">rplE</name>
    <name type="ordered locus">BR1221</name>
    <name type="ordered locus">BS1330_I1217</name>
</gene>
<dbReference type="EMBL" id="AE014291">
    <property type="protein sequence ID" value="AAN30140.1"/>
    <property type="molecule type" value="Genomic_DNA"/>
</dbReference>
<dbReference type="EMBL" id="CP002997">
    <property type="protein sequence ID" value="AEM18558.1"/>
    <property type="molecule type" value="Genomic_DNA"/>
</dbReference>
<dbReference type="PIR" id="AC3348">
    <property type="entry name" value="AC3348"/>
</dbReference>
<dbReference type="RefSeq" id="WP_002964350.1">
    <property type="nucleotide sequence ID" value="NZ_KN046804.1"/>
</dbReference>
<dbReference type="SMR" id="Q8G085"/>
<dbReference type="GeneID" id="97533536"/>
<dbReference type="KEGG" id="bms:BR1221"/>
<dbReference type="KEGG" id="bsi:BS1330_I1217"/>
<dbReference type="PATRIC" id="fig|204722.21.peg.2255"/>
<dbReference type="HOGENOM" id="CLU_061015_2_1_5"/>
<dbReference type="PhylomeDB" id="Q8G085"/>
<dbReference type="Proteomes" id="UP000007104">
    <property type="component" value="Chromosome I"/>
</dbReference>
<dbReference type="GO" id="GO:1990904">
    <property type="term" value="C:ribonucleoprotein complex"/>
    <property type="evidence" value="ECO:0007669"/>
    <property type="project" value="UniProtKB-KW"/>
</dbReference>
<dbReference type="GO" id="GO:0005840">
    <property type="term" value="C:ribosome"/>
    <property type="evidence" value="ECO:0007669"/>
    <property type="project" value="UniProtKB-KW"/>
</dbReference>
<dbReference type="GO" id="GO:0019843">
    <property type="term" value="F:rRNA binding"/>
    <property type="evidence" value="ECO:0007669"/>
    <property type="project" value="UniProtKB-UniRule"/>
</dbReference>
<dbReference type="GO" id="GO:0003735">
    <property type="term" value="F:structural constituent of ribosome"/>
    <property type="evidence" value="ECO:0007669"/>
    <property type="project" value="InterPro"/>
</dbReference>
<dbReference type="GO" id="GO:0000049">
    <property type="term" value="F:tRNA binding"/>
    <property type="evidence" value="ECO:0007669"/>
    <property type="project" value="UniProtKB-UniRule"/>
</dbReference>
<dbReference type="GO" id="GO:0006412">
    <property type="term" value="P:translation"/>
    <property type="evidence" value="ECO:0007669"/>
    <property type="project" value="UniProtKB-UniRule"/>
</dbReference>
<dbReference type="FunFam" id="3.30.1440.10:FF:000001">
    <property type="entry name" value="50S ribosomal protein L5"/>
    <property type="match status" value="1"/>
</dbReference>
<dbReference type="Gene3D" id="3.30.1440.10">
    <property type="match status" value="1"/>
</dbReference>
<dbReference type="HAMAP" id="MF_01333_B">
    <property type="entry name" value="Ribosomal_uL5_B"/>
    <property type="match status" value="1"/>
</dbReference>
<dbReference type="InterPro" id="IPR002132">
    <property type="entry name" value="Ribosomal_uL5"/>
</dbReference>
<dbReference type="InterPro" id="IPR020930">
    <property type="entry name" value="Ribosomal_uL5_bac-type"/>
</dbReference>
<dbReference type="InterPro" id="IPR031309">
    <property type="entry name" value="Ribosomal_uL5_C"/>
</dbReference>
<dbReference type="InterPro" id="IPR020929">
    <property type="entry name" value="Ribosomal_uL5_CS"/>
</dbReference>
<dbReference type="InterPro" id="IPR022803">
    <property type="entry name" value="Ribosomal_uL5_dom_sf"/>
</dbReference>
<dbReference type="InterPro" id="IPR031310">
    <property type="entry name" value="Ribosomal_uL5_N"/>
</dbReference>
<dbReference type="NCBIfam" id="NF000585">
    <property type="entry name" value="PRK00010.1"/>
    <property type="match status" value="1"/>
</dbReference>
<dbReference type="PANTHER" id="PTHR11994">
    <property type="entry name" value="60S RIBOSOMAL PROTEIN L11-RELATED"/>
    <property type="match status" value="1"/>
</dbReference>
<dbReference type="Pfam" id="PF00281">
    <property type="entry name" value="Ribosomal_L5"/>
    <property type="match status" value="1"/>
</dbReference>
<dbReference type="Pfam" id="PF00673">
    <property type="entry name" value="Ribosomal_L5_C"/>
    <property type="match status" value="1"/>
</dbReference>
<dbReference type="PIRSF" id="PIRSF002161">
    <property type="entry name" value="Ribosomal_L5"/>
    <property type="match status" value="1"/>
</dbReference>
<dbReference type="SUPFAM" id="SSF55282">
    <property type="entry name" value="RL5-like"/>
    <property type="match status" value="1"/>
</dbReference>
<dbReference type="PROSITE" id="PS00358">
    <property type="entry name" value="RIBOSOMAL_L5"/>
    <property type="match status" value="1"/>
</dbReference>
<keyword id="KW-0687">Ribonucleoprotein</keyword>
<keyword id="KW-0689">Ribosomal protein</keyword>
<keyword id="KW-0694">RNA-binding</keyword>
<keyword id="KW-0699">rRNA-binding</keyword>
<keyword id="KW-0820">tRNA-binding</keyword>
<sequence length="185" mass="21074">MAEAKALPRFKKLYQDNIRKALLEEFKYDNEMQIPRITKVVLNMGVGEATGDSKKPAVAAEDLAMIAGQKAVVTRARNSIATFKLREGMPIGAKVTLRQDRMYEFLDRLITIALPRVRDFRGLNPKSFDGRGNYAMGIKEHIVFPEINYDKVDQIWGMDIIVCTTAKTDDEARSLLRAFNFPFRQ</sequence>
<feature type="chain" id="PRO_0000124902" description="Large ribosomal subunit protein uL5">
    <location>
        <begin position="1"/>
        <end position="185"/>
    </location>
</feature>
<name>RL5_BRUSU</name>
<reference key="1">
    <citation type="journal article" date="2002" name="Proc. Natl. Acad. Sci. U.S.A.">
        <title>The Brucella suis genome reveals fundamental similarities between animal and plant pathogens and symbionts.</title>
        <authorList>
            <person name="Paulsen I.T."/>
            <person name="Seshadri R."/>
            <person name="Nelson K.E."/>
            <person name="Eisen J.A."/>
            <person name="Heidelberg J.F."/>
            <person name="Read T.D."/>
            <person name="Dodson R.J."/>
            <person name="Umayam L.A."/>
            <person name="Brinkac L.M."/>
            <person name="Beanan M.J."/>
            <person name="Daugherty S.C."/>
            <person name="DeBoy R.T."/>
            <person name="Durkin A.S."/>
            <person name="Kolonay J.F."/>
            <person name="Madupu R."/>
            <person name="Nelson W.C."/>
            <person name="Ayodeji B."/>
            <person name="Kraul M."/>
            <person name="Shetty J."/>
            <person name="Malek J.A."/>
            <person name="Van Aken S.E."/>
            <person name="Riedmuller S."/>
            <person name="Tettelin H."/>
            <person name="Gill S.R."/>
            <person name="White O."/>
            <person name="Salzberg S.L."/>
            <person name="Hoover D.L."/>
            <person name="Lindler L.E."/>
            <person name="Halling S.M."/>
            <person name="Boyle S.M."/>
            <person name="Fraser C.M."/>
        </authorList>
    </citation>
    <scope>NUCLEOTIDE SEQUENCE [LARGE SCALE GENOMIC DNA]</scope>
    <source>
        <strain>1330</strain>
    </source>
</reference>
<reference key="2">
    <citation type="journal article" date="2011" name="J. Bacteriol.">
        <title>Revised genome sequence of Brucella suis 1330.</title>
        <authorList>
            <person name="Tae H."/>
            <person name="Shallom S."/>
            <person name="Settlage R."/>
            <person name="Preston D."/>
            <person name="Adams L.G."/>
            <person name="Garner H.R."/>
        </authorList>
    </citation>
    <scope>NUCLEOTIDE SEQUENCE [LARGE SCALE GENOMIC DNA]</scope>
    <source>
        <strain>1330</strain>
    </source>
</reference>
<evidence type="ECO:0000255" key="1">
    <source>
        <dbReference type="HAMAP-Rule" id="MF_01333"/>
    </source>
</evidence>
<evidence type="ECO:0000305" key="2"/>
<organism>
    <name type="scientific">Brucella suis biovar 1 (strain 1330)</name>
    <dbReference type="NCBI Taxonomy" id="204722"/>
    <lineage>
        <taxon>Bacteria</taxon>
        <taxon>Pseudomonadati</taxon>
        <taxon>Pseudomonadota</taxon>
        <taxon>Alphaproteobacteria</taxon>
        <taxon>Hyphomicrobiales</taxon>
        <taxon>Brucellaceae</taxon>
        <taxon>Brucella/Ochrobactrum group</taxon>
        <taxon>Brucella</taxon>
    </lineage>
</organism>
<protein>
    <recommendedName>
        <fullName evidence="1">Large ribosomal subunit protein uL5</fullName>
    </recommendedName>
    <alternativeName>
        <fullName evidence="2">50S ribosomal protein L5</fullName>
    </alternativeName>
</protein>
<proteinExistence type="inferred from homology"/>
<accession>Q8G085</accession>
<accession>G0KAE2</accession>
<comment type="function">
    <text evidence="1">This is one of the proteins that bind and probably mediate the attachment of the 5S RNA into the large ribosomal subunit, where it forms part of the central protuberance. In the 70S ribosome it contacts protein S13 of the 30S subunit (bridge B1b), connecting the 2 subunits; this bridge is implicated in subunit movement. Contacts the P site tRNA; the 5S rRNA and some of its associated proteins might help stabilize positioning of ribosome-bound tRNAs.</text>
</comment>
<comment type="subunit">
    <text evidence="1">Part of the 50S ribosomal subunit; part of the 5S rRNA/L5/L18/L25 subcomplex. Contacts the 5S rRNA and the P site tRNA. Forms a bridge to the 30S subunit in the 70S ribosome.</text>
</comment>
<comment type="similarity">
    <text evidence="1">Belongs to the universal ribosomal protein uL5 family.</text>
</comment>